<comment type="function">
    <text evidence="1">Catalyzes the irreversible NADPH-dependent deamination of GMP to IMP. It functions in the conversion of nucleobase, nucleoside and nucleotide derivatives of G to A nucleotides, and in maintaining the intracellular balance of A and G nucleotides.</text>
</comment>
<comment type="catalytic activity">
    <reaction evidence="1">
        <text>IMP + NH4(+) + NADP(+) = GMP + NADPH + 2 H(+)</text>
        <dbReference type="Rhea" id="RHEA:17185"/>
        <dbReference type="ChEBI" id="CHEBI:15378"/>
        <dbReference type="ChEBI" id="CHEBI:28938"/>
        <dbReference type="ChEBI" id="CHEBI:57783"/>
        <dbReference type="ChEBI" id="CHEBI:58053"/>
        <dbReference type="ChEBI" id="CHEBI:58115"/>
        <dbReference type="ChEBI" id="CHEBI:58349"/>
        <dbReference type="EC" id="1.7.1.7"/>
    </reaction>
</comment>
<comment type="subunit">
    <text evidence="1">Homotetramer.</text>
</comment>
<comment type="similarity">
    <text evidence="1">Belongs to the IMPDH/GMPR family. GuaC type 1 subfamily.</text>
</comment>
<dbReference type="EC" id="1.7.1.7" evidence="1"/>
<dbReference type="EMBL" id="CP000822">
    <property type="protein sequence ID" value="ABV14355.1"/>
    <property type="molecule type" value="Genomic_DNA"/>
</dbReference>
<dbReference type="RefSeq" id="WP_012134060.1">
    <property type="nucleotide sequence ID" value="NC_009792.1"/>
</dbReference>
<dbReference type="SMR" id="A8ALJ2"/>
<dbReference type="STRING" id="290338.CKO_03271"/>
<dbReference type="GeneID" id="45137045"/>
<dbReference type="KEGG" id="cko:CKO_03271"/>
<dbReference type="HOGENOM" id="CLU_022552_5_3_6"/>
<dbReference type="OrthoDB" id="9805398at2"/>
<dbReference type="Proteomes" id="UP000008148">
    <property type="component" value="Chromosome"/>
</dbReference>
<dbReference type="GO" id="GO:0005829">
    <property type="term" value="C:cytosol"/>
    <property type="evidence" value="ECO:0007669"/>
    <property type="project" value="TreeGrafter"/>
</dbReference>
<dbReference type="GO" id="GO:1902560">
    <property type="term" value="C:GMP reductase complex"/>
    <property type="evidence" value="ECO:0007669"/>
    <property type="project" value="InterPro"/>
</dbReference>
<dbReference type="GO" id="GO:0003920">
    <property type="term" value="F:GMP reductase activity"/>
    <property type="evidence" value="ECO:0007669"/>
    <property type="project" value="UniProtKB-UniRule"/>
</dbReference>
<dbReference type="GO" id="GO:0046872">
    <property type="term" value="F:metal ion binding"/>
    <property type="evidence" value="ECO:0007669"/>
    <property type="project" value="UniProtKB-KW"/>
</dbReference>
<dbReference type="GO" id="GO:0006163">
    <property type="term" value="P:purine nucleotide metabolic process"/>
    <property type="evidence" value="ECO:0007669"/>
    <property type="project" value="UniProtKB-UniRule"/>
</dbReference>
<dbReference type="CDD" id="cd00381">
    <property type="entry name" value="IMPDH"/>
    <property type="match status" value="1"/>
</dbReference>
<dbReference type="FunFam" id="3.20.20.70:FF:000012">
    <property type="entry name" value="GMP reductase"/>
    <property type="match status" value="1"/>
</dbReference>
<dbReference type="Gene3D" id="3.20.20.70">
    <property type="entry name" value="Aldolase class I"/>
    <property type="match status" value="1"/>
</dbReference>
<dbReference type="HAMAP" id="MF_00596">
    <property type="entry name" value="GMP_reduct_type1"/>
    <property type="match status" value="1"/>
</dbReference>
<dbReference type="InterPro" id="IPR013785">
    <property type="entry name" value="Aldolase_TIM"/>
</dbReference>
<dbReference type="InterPro" id="IPR050139">
    <property type="entry name" value="GMP_reductase"/>
</dbReference>
<dbReference type="InterPro" id="IPR005993">
    <property type="entry name" value="GMPR"/>
</dbReference>
<dbReference type="InterPro" id="IPR015875">
    <property type="entry name" value="IMP_DH/GMP_Rdtase_CS"/>
</dbReference>
<dbReference type="InterPro" id="IPR001093">
    <property type="entry name" value="IMP_DH_GMPRt"/>
</dbReference>
<dbReference type="NCBIfam" id="TIGR01305">
    <property type="entry name" value="GMP_reduct_1"/>
    <property type="match status" value="1"/>
</dbReference>
<dbReference type="NCBIfam" id="NF003470">
    <property type="entry name" value="PRK05096.1"/>
    <property type="match status" value="1"/>
</dbReference>
<dbReference type="PANTHER" id="PTHR43170">
    <property type="entry name" value="GMP REDUCTASE"/>
    <property type="match status" value="1"/>
</dbReference>
<dbReference type="PANTHER" id="PTHR43170:SF5">
    <property type="entry name" value="GMP REDUCTASE"/>
    <property type="match status" value="1"/>
</dbReference>
<dbReference type="Pfam" id="PF00478">
    <property type="entry name" value="IMPDH"/>
    <property type="match status" value="1"/>
</dbReference>
<dbReference type="PIRSF" id="PIRSF000235">
    <property type="entry name" value="GMP_reductase"/>
    <property type="match status" value="1"/>
</dbReference>
<dbReference type="SMART" id="SM01240">
    <property type="entry name" value="IMPDH"/>
    <property type="match status" value="1"/>
</dbReference>
<dbReference type="SUPFAM" id="SSF51412">
    <property type="entry name" value="Inosine monophosphate dehydrogenase (IMPDH)"/>
    <property type="match status" value="1"/>
</dbReference>
<dbReference type="PROSITE" id="PS00487">
    <property type="entry name" value="IMP_DH_GMP_RED"/>
    <property type="match status" value="1"/>
</dbReference>
<accession>A8ALJ2</accession>
<evidence type="ECO:0000255" key="1">
    <source>
        <dbReference type="HAMAP-Rule" id="MF_00596"/>
    </source>
</evidence>
<protein>
    <recommendedName>
        <fullName evidence="1">GMP reductase</fullName>
        <ecNumber evidence="1">1.7.1.7</ecNumber>
    </recommendedName>
    <alternativeName>
        <fullName evidence="1">Guanosine 5'-monophosphate oxidoreductase</fullName>
        <shortName evidence="1">Guanosine monophosphate reductase</shortName>
    </alternativeName>
</protein>
<feature type="chain" id="PRO_1000025610" description="GMP reductase">
    <location>
        <begin position="1"/>
        <end position="347"/>
    </location>
</feature>
<feature type="active site" description="Thioimidate intermediate" evidence="1">
    <location>
        <position position="186"/>
    </location>
</feature>
<feature type="binding site" evidence="1">
    <location>
        <begin position="108"/>
        <end position="131"/>
    </location>
    <ligand>
        <name>NADP(+)</name>
        <dbReference type="ChEBI" id="CHEBI:58349"/>
    </ligand>
</feature>
<feature type="binding site" evidence="1">
    <location>
        <position position="181"/>
    </location>
    <ligand>
        <name>K(+)</name>
        <dbReference type="ChEBI" id="CHEBI:29103"/>
    </ligand>
</feature>
<feature type="binding site" evidence="1">
    <location>
        <position position="183"/>
    </location>
    <ligand>
        <name>K(+)</name>
        <dbReference type="ChEBI" id="CHEBI:29103"/>
    </ligand>
</feature>
<feature type="binding site" evidence="1">
    <location>
        <begin position="216"/>
        <end position="239"/>
    </location>
    <ligand>
        <name>NADP(+)</name>
        <dbReference type="ChEBI" id="CHEBI:58349"/>
    </ligand>
</feature>
<proteinExistence type="inferred from homology"/>
<name>GUAC_CITK8</name>
<keyword id="KW-0479">Metal-binding</keyword>
<keyword id="KW-0521">NADP</keyword>
<keyword id="KW-0560">Oxidoreductase</keyword>
<keyword id="KW-0630">Potassium</keyword>
<keyword id="KW-1185">Reference proteome</keyword>
<reference key="1">
    <citation type="submission" date="2007-08" db="EMBL/GenBank/DDBJ databases">
        <authorList>
            <consortium name="The Citrobacter koseri Genome Sequencing Project"/>
            <person name="McClelland M."/>
            <person name="Sanderson E.K."/>
            <person name="Porwollik S."/>
            <person name="Spieth J."/>
            <person name="Clifton W.S."/>
            <person name="Latreille P."/>
            <person name="Courtney L."/>
            <person name="Wang C."/>
            <person name="Pepin K."/>
            <person name="Bhonagiri V."/>
            <person name="Nash W."/>
            <person name="Johnson M."/>
            <person name="Thiruvilangam P."/>
            <person name="Wilson R."/>
        </authorList>
    </citation>
    <scope>NUCLEOTIDE SEQUENCE [LARGE SCALE GENOMIC DNA]</scope>
    <source>
        <strain>ATCC BAA-895 / CDC 4225-83 / SGSC4696</strain>
    </source>
</reference>
<organism>
    <name type="scientific">Citrobacter koseri (strain ATCC BAA-895 / CDC 4225-83 / SGSC4696)</name>
    <dbReference type="NCBI Taxonomy" id="290338"/>
    <lineage>
        <taxon>Bacteria</taxon>
        <taxon>Pseudomonadati</taxon>
        <taxon>Pseudomonadota</taxon>
        <taxon>Gammaproteobacteria</taxon>
        <taxon>Enterobacterales</taxon>
        <taxon>Enterobacteriaceae</taxon>
        <taxon>Citrobacter</taxon>
    </lineage>
</organism>
<sequence length="347" mass="37358">MRIEEDLKLGFKDVLIRPKRSTLKSRSDVELERQFTFKHSGQTWSGVPIIAANMDTVGTFEMASALASFDILTAVHKHYSVEDWNAFTSTASEDVLRHVMVSTGTSDADFEKTKQILAQSPALNFVCIDVANGYSEHFVQFVSKAREAWPTKTICAGNVVTGEMCEELVLSGADIVKVGIGPGSVCTTRVKTGVGYPQLSAVIECADAAHGLGGMIVSDGGCTMPGDVAKAFGGGADFVMLGGMLAGHEESGGKIVEENGEKFMLFYGMSSESAMTRHVGGVAQYRAAEGKTVKLPLRGPVEYTARDILGGLRSACTYVGASRLKELTKRTTFIRVQEQENRVFNSL</sequence>
<gene>
    <name evidence="1" type="primary">guaC</name>
    <name type="ordered locus">CKO_03271</name>
</gene>